<reference key="1">
    <citation type="journal article" date="2005" name="Science">
        <title>The transcriptional landscape of the mammalian genome.</title>
        <authorList>
            <person name="Carninci P."/>
            <person name="Kasukawa T."/>
            <person name="Katayama S."/>
            <person name="Gough J."/>
            <person name="Frith M.C."/>
            <person name="Maeda N."/>
            <person name="Oyama R."/>
            <person name="Ravasi T."/>
            <person name="Lenhard B."/>
            <person name="Wells C."/>
            <person name="Kodzius R."/>
            <person name="Shimokawa K."/>
            <person name="Bajic V.B."/>
            <person name="Brenner S.E."/>
            <person name="Batalov S."/>
            <person name="Forrest A.R."/>
            <person name="Zavolan M."/>
            <person name="Davis M.J."/>
            <person name="Wilming L.G."/>
            <person name="Aidinis V."/>
            <person name="Allen J.E."/>
            <person name="Ambesi-Impiombato A."/>
            <person name="Apweiler R."/>
            <person name="Aturaliya R.N."/>
            <person name="Bailey T.L."/>
            <person name="Bansal M."/>
            <person name="Baxter L."/>
            <person name="Beisel K.W."/>
            <person name="Bersano T."/>
            <person name="Bono H."/>
            <person name="Chalk A.M."/>
            <person name="Chiu K.P."/>
            <person name="Choudhary V."/>
            <person name="Christoffels A."/>
            <person name="Clutterbuck D.R."/>
            <person name="Crowe M.L."/>
            <person name="Dalla E."/>
            <person name="Dalrymple B.P."/>
            <person name="de Bono B."/>
            <person name="Della Gatta G."/>
            <person name="di Bernardo D."/>
            <person name="Down T."/>
            <person name="Engstrom P."/>
            <person name="Fagiolini M."/>
            <person name="Faulkner G."/>
            <person name="Fletcher C.F."/>
            <person name="Fukushima T."/>
            <person name="Furuno M."/>
            <person name="Futaki S."/>
            <person name="Gariboldi M."/>
            <person name="Georgii-Hemming P."/>
            <person name="Gingeras T.R."/>
            <person name="Gojobori T."/>
            <person name="Green R.E."/>
            <person name="Gustincich S."/>
            <person name="Harbers M."/>
            <person name="Hayashi Y."/>
            <person name="Hensch T.K."/>
            <person name="Hirokawa N."/>
            <person name="Hill D."/>
            <person name="Huminiecki L."/>
            <person name="Iacono M."/>
            <person name="Ikeo K."/>
            <person name="Iwama A."/>
            <person name="Ishikawa T."/>
            <person name="Jakt M."/>
            <person name="Kanapin A."/>
            <person name="Katoh M."/>
            <person name="Kawasawa Y."/>
            <person name="Kelso J."/>
            <person name="Kitamura H."/>
            <person name="Kitano H."/>
            <person name="Kollias G."/>
            <person name="Krishnan S.P."/>
            <person name="Kruger A."/>
            <person name="Kummerfeld S.K."/>
            <person name="Kurochkin I.V."/>
            <person name="Lareau L.F."/>
            <person name="Lazarevic D."/>
            <person name="Lipovich L."/>
            <person name="Liu J."/>
            <person name="Liuni S."/>
            <person name="McWilliam S."/>
            <person name="Madan Babu M."/>
            <person name="Madera M."/>
            <person name="Marchionni L."/>
            <person name="Matsuda H."/>
            <person name="Matsuzawa S."/>
            <person name="Miki H."/>
            <person name="Mignone F."/>
            <person name="Miyake S."/>
            <person name="Morris K."/>
            <person name="Mottagui-Tabar S."/>
            <person name="Mulder N."/>
            <person name="Nakano N."/>
            <person name="Nakauchi H."/>
            <person name="Ng P."/>
            <person name="Nilsson R."/>
            <person name="Nishiguchi S."/>
            <person name="Nishikawa S."/>
            <person name="Nori F."/>
            <person name="Ohara O."/>
            <person name="Okazaki Y."/>
            <person name="Orlando V."/>
            <person name="Pang K.C."/>
            <person name="Pavan W.J."/>
            <person name="Pavesi G."/>
            <person name="Pesole G."/>
            <person name="Petrovsky N."/>
            <person name="Piazza S."/>
            <person name="Reed J."/>
            <person name="Reid J.F."/>
            <person name="Ring B.Z."/>
            <person name="Ringwald M."/>
            <person name="Rost B."/>
            <person name="Ruan Y."/>
            <person name="Salzberg S.L."/>
            <person name="Sandelin A."/>
            <person name="Schneider C."/>
            <person name="Schoenbach C."/>
            <person name="Sekiguchi K."/>
            <person name="Semple C.A."/>
            <person name="Seno S."/>
            <person name="Sessa L."/>
            <person name="Sheng Y."/>
            <person name="Shibata Y."/>
            <person name="Shimada H."/>
            <person name="Shimada K."/>
            <person name="Silva D."/>
            <person name="Sinclair B."/>
            <person name="Sperling S."/>
            <person name="Stupka E."/>
            <person name="Sugiura K."/>
            <person name="Sultana R."/>
            <person name="Takenaka Y."/>
            <person name="Taki K."/>
            <person name="Tammoja K."/>
            <person name="Tan S.L."/>
            <person name="Tang S."/>
            <person name="Taylor M.S."/>
            <person name="Tegner J."/>
            <person name="Teichmann S.A."/>
            <person name="Ueda H.R."/>
            <person name="van Nimwegen E."/>
            <person name="Verardo R."/>
            <person name="Wei C.L."/>
            <person name="Yagi K."/>
            <person name="Yamanishi H."/>
            <person name="Zabarovsky E."/>
            <person name="Zhu S."/>
            <person name="Zimmer A."/>
            <person name="Hide W."/>
            <person name="Bult C."/>
            <person name="Grimmond S.M."/>
            <person name="Teasdale R.D."/>
            <person name="Liu E.T."/>
            <person name="Brusic V."/>
            <person name="Quackenbush J."/>
            <person name="Wahlestedt C."/>
            <person name="Mattick J.S."/>
            <person name="Hume D.A."/>
            <person name="Kai C."/>
            <person name="Sasaki D."/>
            <person name="Tomaru Y."/>
            <person name="Fukuda S."/>
            <person name="Kanamori-Katayama M."/>
            <person name="Suzuki M."/>
            <person name="Aoki J."/>
            <person name="Arakawa T."/>
            <person name="Iida J."/>
            <person name="Imamura K."/>
            <person name="Itoh M."/>
            <person name="Kato T."/>
            <person name="Kawaji H."/>
            <person name="Kawagashira N."/>
            <person name="Kawashima T."/>
            <person name="Kojima M."/>
            <person name="Kondo S."/>
            <person name="Konno H."/>
            <person name="Nakano K."/>
            <person name="Ninomiya N."/>
            <person name="Nishio T."/>
            <person name="Okada M."/>
            <person name="Plessy C."/>
            <person name="Shibata K."/>
            <person name="Shiraki T."/>
            <person name="Suzuki S."/>
            <person name="Tagami M."/>
            <person name="Waki K."/>
            <person name="Watahiki A."/>
            <person name="Okamura-Oho Y."/>
            <person name="Suzuki H."/>
            <person name="Kawai J."/>
            <person name="Hayashizaki Y."/>
        </authorList>
    </citation>
    <scope>NUCLEOTIDE SEQUENCE [LARGE SCALE MRNA] (ISOFORM 2)</scope>
    <source>
        <strain>C57BL/6J</strain>
    </source>
</reference>
<reference key="2">
    <citation type="journal article" date="2009" name="PLoS Biol.">
        <title>Lineage-specific biology revealed by a finished genome assembly of the mouse.</title>
        <authorList>
            <person name="Church D.M."/>
            <person name="Goodstadt L."/>
            <person name="Hillier L.W."/>
            <person name="Zody M.C."/>
            <person name="Goldstein S."/>
            <person name="She X."/>
            <person name="Bult C.J."/>
            <person name="Agarwala R."/>
            <person name="Cherry J.L."/>
            <person name="DiCuccio M."/>
            <person name="Hlavina W."/>
            <person name="Kapustin Y."/>
            <person name="Meric P."/>
            <person name="Maglott D."/>
            <person name="Birtle Z."/>
            <person name="Marques A.C."/>
            <person name="Graves T."/>
            <person name="Zhou S."/>
            <person name="Teague B."/>
            <person name="Potamousis K."/>
            <person name="Churas C."/>
            <person name="Place M."/>
            <person name="Herschleb J."/>
            <person name="Runnheim R."/>
            <person name="Forrest D."/>
            <person name="Amos-Landgraf J."/>
            <person name="Schwartz D.C."/>
            <person name="Cheng Z."/>
            <person name="Lindblad-Toh K."/>
            <person name="Eichler E.E."/>
            <person name="Ponting C.P."/>
        </authorList>
    </citation>
    <scope>NUCLEOTIDE SEQUENCE [LARGE SCALE GENOMIC DNA]</scope>
    <source>
        <strain>C57BL/6J</strain>
    </source>
</reference>
<dbReference type="EMBL" id="AK003729">
    <property type="protein sequence ID" value="BAB22964.1"/>
    <property type="molecule type" value="mRNA"/>
</dbReference>
<dbReference type="EMBL" id="AC165283">
    <property type="status" value="NOT_ANNOTATED_CDS"/>
    <property type="molecule type" value="Genomic_DNA"/>
</dbReference>
<dbReference type="CCDS" id="CCDS79109.1">
    <molecule id="Q9D1B8-2"/>
</dbReference>
<dbReference type="RefSeq" id="NP_001171435.2">
    <molecule id="Q9D1B8-2"/>
    <property type="nucleotide sequence ID" value="NM_001177964.2"/>
</dbReference>
<dbReference type="SMR" id="Q9D1B8"/>
<dbReference type="FunCoup" id="Q9D1B8">
    <property type="interactions" value="9"/>
</dbReference>
<dbReference type="STRING" id="10090.ENSMUSP00000140603"/>
<dbReference type="PhosphoSitePlus" id="Q9D1B8"/>
<dbReference type="PaxDb" id="10090-ENSMUSP00000020963"/>
<dbReference type="ProteomicsDB" id="277964">
    <molecule id="Q9D1B8-1"/>
</dbReference>
<dbReference type="ProteomicsDB" id="277965">
    <molecule id="Q9D1B8-2"/>
</dbReference>
<dbReference type="Antibodypedia" id="50948">
    <property type="antibodies" value="8 antibodies from 7 providers"/>
</dbReference>
<dbReference type="GeneID" id="68511"/>
<dbReference type="KEGG" id="mmu:68511"/>
<dbReference type="UCSC" id="uc007nfo.1">
    <molecule id="Q9D1B8-1"/>
    <property type="organism name" value="mouse"/>
</dbReference>
<dbReference type="AGR" id="MGI:1915761"/>
<dbReference type="CTD" id="728597"/>
<dbReference type="MGI" id="MGI:1915761">
    <property type="gene designation" value="Dcdc2c"/>
</dbReference>
<dbReference type="VEuPathDB" id="HostDB:ENSMUSG00000020633"/>
<dbReference type="eggNOG" id="KOG3757">
    <property type="taxonomic scope" value="Eukaryota"/>
</dbReference>
<dbReference type="HOGENOM" id="CLU_126324_0_0_1"/>
<dbReference type="InParanoid" id="Q9D1B8"/>
<dbReference type="PhylomeDB" id="Q9D1B8"/>
<dbReference type="BioGRID-ORCS" id="68511">
    <property type="hits" value="3 hits in 70 CRISPR screens"/>
</dbReference>
<dbReference type="PRO" id="PR:Q9D1B8"/>
<dbReference type="Proteomes" id="UP000000589">
    <property type="component" value="Chromosome 12"/>
</dbReference>
<dbReference type="RNAct" id="Q9D1B8">
    <property type="molecule type" value="protein"/>
</dbReference>
<dbReference type="Bgee" id="ENSMUSG00000020633">
    <property type="expression patterns" value="Expressed in spermatid and 30 other cell types or tissues"/>
</dbReference>
<dbReference type="ExpressionAtlas" id="Q9D1B8">
    <property type="expression patterns" value="baseline and differential"/>
</dbReference>
<dbReference type="GO" id="GO:0005737">
    <property type="term" value="C:cytoplasm"/>
    <property type="evidence" value="ECO:0000250"/>
    <property type="project" value="UniProtKB"/>
</dbReference>
<dbReference type="GO" id="GO:0036126">
    <property type="term" value="C:sperm flagellum"/>
    <property type="evidence" value="ECO:0000250"/>
    <property type="project" value="UniProtKB"/>
</dbReference>
<dbReference type="GO" id="GO:0035556">
    <property type="term" value="P:intracellular signal transduction"/>
    <property type="evidence" value="ECO:0007669"/>
    <property type="project" value="InterPro"/>
</dbReference>
<dbReference type="FunFam" id="3.10.20.230:FF:000012">
    <property type="entry name" value="Doublecortin domain containing 2C"/>
    <property type="match status" value="1"/>
</dbReference>
<dbReference type="FunFam" id="3.10.20.230:FF:000015">
    <property type="entry name" value="Doublecortin domain containing 2C"/>
    <property type="match status" value="1"/>
</dbReference>
<dbReference type="Gene3D" id="3.10.20.230">
    <property type="entry name" value="Doublecortin domain"/>
    <property type="match status" value="2"/>
</dbReference>
<dbReference type="InterPro" id="IPR003533">
    <property type="entry name" value="Doublecortin_dom"/>
</dbReference>
<dbReference type="InterPro" id="IPR036572">
    <property type="entry name" value="Doublecortin_dom_sf"/>
</dbReference>
<dbReference type="PANTHER" id="PTHR23004">
    <property type="entry name" value="DOUBLECORTIN DOMAIN CONTAINING 2"/>
    <property type="match status" value="1"/>
</dbReference>
<dbReference type="PANTHER" id="PTHR23004:SF9">
    <property type="entry name" value="DOUBLECORTIN DOMAIN-CONTAINING PROTEIN 2C"/>
    <property type="match status" value="1"/>
</dbReference>
<dbReference type="Pfam" id="PF03607">
    <property type="entry name" value="DCX"/>
    <property type="match status" value="2"/>
</dbReference>
<dbReference type="SMART" id="SM00537">
    <property type="entry name" value="DCX"/>
    <property type="match status" value="2"/>
</dbReference>
<dbReference type="SUPFAM" id="SSF89837">
    <property type="entry name" value="Doublecortin (DC)"/>
    <property type="match status" value="2"/>
</dbReference>
<dbReference type="PROSITE" id="PS50309">
    <property type="entry name" value="DC"/>
    <property type="match status" value="2"/>
</dbReference>
<evidence type="ECO:0000250" key="1">
    <source>
        <dbReference type="UniProtKB" id="A8MYV0"/>
    </source>
</evidence>
<evidence type="ECO:0000255" key="2">
    <source>
        <dbReference type="PROSITE-ProRule" id="PRU00072"/>
    </source>
</evidence>
<evidence type="ECO:0000256" key="3">
    <source>
        <dbReference type="SAM" id="MobiDB-lite"/>
    </source>
</evidence>
<evidence type="ECO:0000303" key="4">
    <source>
    </source>
</evidence>
<evidence type="ECO:0000305" key="5"/>
<evidence type="ECO:0000312" key="6">
    <source>
        <dbReference type="MGI" id="MGI:1915761"/>
    </source>
</evidence>
<sequence length="347" mass="39355">MGTRGPYALVDTTPAKTILVYRNGDQFYVGRKFVFSRRRVANFEALLEQLTEQVEVPFGVRRLYTPTRGHPVLGLDALQTGGKYVAAGRERFKKLDYIHIVPRKPSKMRKLKEIKPVVHCDIKVPSRWQIQSRTSRYINVFTNGRLFIPPIKVIIPKFSLSDWNSVLAMIGEKVFPLGGVRKLFTMDGHLLDDSKNLQDNYFYVAAGLETFKSIPYWKSSWVPSEVQQRFGGNDKYTQTKKRVESKVKEPLQNDSVPPRSQDSVYYAKEKKQMDTELLVQSGAEGDVYKAQTPAKEAQEALEVKEDPEVKVEVPVDQAPAEIVKEIDEIGDSSPGLKSGMHIPASFM</sequence>
<keyword id="KW-0025">Alternative splicing</keyword>
<keyword id="KW-0966">Cell projection</keyword>
<keyword id="KW-0969">Cilium</keyword>
<keyword id="KW-0963">Cytoplasm</keyword>
<keyword id="KW-0282">Flagellum</keyword>
<keyword id="KW-1185">Reference proteome</keyword>
<keyword id="KW-0677">Repeat</keyword>
<proteinExistence type="evidence at transcript level"/>
<organism>
    <name type="scientific">Mus musculus</name>
    <name type="common">Mouse</name>
    <dbReference type="NCBI Taxonomy" id="10090"/>
    <lineage>
        <taxon>Eukaryota</taxon>
        <taxon>Metazoa</taxon>
        <taxon>Chordata</taxon>
        <taxon>Craniata</taxon>
        <taxon>Vertebrata</taxon>
        <taxon>Euteleostomi</taxon>
        <taxon>Mammalia</taxon>
        <taxon>Eutheria</taxon>
        <taxon>Euarchontoglires</taxon>
        <taxon>Glires</taxon>
        <taxon>Rodentia</taxon>
        <taxon>Myomorpha</taxon>
        <taxon>Muroidea</taxon>
        <taxon>Muridae</taxon>
        <taxon>Murinae</taxon>
        <taxon>Mus</taxon>
        <taxon>Mus</taxon>
    </lineage>
</organism>
<name>DCD2C_MOUSE</name>
<protein>
    <recommendedName>
        <fullName evidence="5">Doublecortin domain-containing protein 2C</fullName>
    </recommendedName>
</protein>
<accession>Q9D1B8</accession>
<comment type="subcellular location">
    <subcellularLocation>
        <location evidence="1">Cell projection</location>
        <location evidence="1">Cilium</location>
        <location evidence="1">Flagellum</location>
    </subcellularLocation>
    <subcellularLocation>
        <location evidence="1">Cytoplasm</location>
    </subcellularLocation>
    <text evidence="1">Detected along the length of the sperm flagellum and in the cytoplasm of the germ cells.</text>
</comment>
<comment type="alternative products">
    <event type="alternative splicing"/>
    <isoform>
        <id>Q9D1B8-1</id>
        <name>1</name>
        <sequence type="displayed"/>
    </isoform>
    <isoform>
        <id>Q9D1B8-2</id>
        <name>2</name>
        <sequence type="described" ref="VSP_040534"/>
    </isoform>
</comment>
<gene>
    <name evidence="6" type="primary">Dcdc2c</name>
</gene>
<feature type="chain" id="PRO_0000344450" description="Doublecortin domain-containing protein 2C">
    <location>
        <begin position="1"/>
        <end position="347"/>
    </location>
</feature>
<feature type="domain" description="Doublecortin 1" evidence="2">
    <location>
        <begin position="16"/>
        <end position="98"/>
    </location>
</feature>
<feature type="domain" description="Doublecortin 2" evidence="2">
    <location>
        <begin position="136"/>
        <end position="217"/>
    </location>
</feature>
<feature type="region of interest" description="Disordered" evidence="3">
    <location>
        <begin position="235"/>
        <end position="260"/>
    </location>
</feature>
<feature type="compositionally biased region" description="Basic and acidic residues" evidence="3">
    <location>
        <begin position="241"/>
        <end position="251"/>
    </location>
</feature>
<feature type="splice variant" id="VSP_040534" description="In isoform 2." evidence="4">
    <location>
        <begin position="1"/>
        <end position="168"/>
    </location>
</feature>